<dbReference type="EMBL" id="AC034236">
    <property type="status" value="NOT_ANNOTATED_CDS"/>
    <property type="molecule type" value="Genomic_DNA"/>
</dbReference>
<dbReference type="CCDS" id="CCDS59490.1"/>
<dbReference type="RefSeq" id="NP_001182510.1">
    <property type="nucleotide sequence ID" value="NM_001195581.2"/>
</dbReference>
<dbReference type="RefSeq" id="NP_001380903.1">
    <property type="nucleotide sequence ID" value="NM_001393974.1"/>
</dbReference>
<dbReference type="RefSeq" id="XP_016865211.1">
    <property type="nucleotide sequence ID" value="XM_017009722.1"/>
</dbReference>
<dbReference type="SMR" id="P0DKL9"/>
<dbReference type="BioGRID" id="569315">
    <property type="interactions" value="1"/>
</dbReference>
<dbReference type="FunCoup" id="P0DKL9">
    <property type="interactions" value="30"/>
</dbReference>
<dbReference type="STRING" id="9606.ENSP00000472409"/>
<dbReference type="iPTMnet" id="P0DKL9"/>
<dbReference type="PhosphoSitePlus" id="P0DKL9"/>
<dbReference type="BioMuta" id="ARL14EPL"/>
<dbReference type="DMDM" id="408387568"/>
<dbReference type="MassIVE" id="P0DKL9"/>
<dbReference type="PaxDb" id="9606-ENSP00000472409"/>
<dbReference type="PeptideAtlas" id="P0DKL9"/>
<dbReference type="DNASU" id="644100"/>
<dbReference type="Ensembl" id="ENST00000601302.3">
    <property type="protein sequence ID" value="ENSP00000472409.1"/>
    <property type="gene ID" value="ENSG00000268223.7"/>
</dbReference>
<dbReference type="Ensembl" id="ENST00000686077.1">
    <property type="protein sequence ID" value="ENSP00000510304.1"/>
    <property type="gene ID" value="ENSG00000268223.7"/>
</dbReference>
<dbReference type="GeneID" id="644100"/>
<dbReference type="KEGG" id="hsa:644100"/>
<dbReference type="MANE-Select" id="ENST00000686077.1">
    <property type="protein sequence ID" value="ENSP00000510304.1"/>
    <property type="RefSeq nucleotide sequence ID" value="NM_001195581.2"/>
    <property type="RefSeq protein sequence ID" value="NP_001182510.1"/>
</dbReference>
<dbReference type="UCSC" id="uc021yct.2">
    <property type="organism name" value="human"/>
</dbReference>
<dbReference type="AGR" id="HGNC:44201"/>
<dbReference type="CTD" id="644100"/>
<dbReference type="GeneCards" id="ARL14EPL"/>
<dbReference type="HGNC" id="HGNC:44201">
    <property type="gene designation" value="ARL14EPL"/>
</dbReference>
<dbReference type="HPA" id="ENSG00000268223">
    <property type="expression patterns" value="Not detected"/>
</dbReference>
<dbReference type="neXtProt" id="NX_P0DKL9"/>
<dbReference type="OpenTargets" id="ENSG00000268223"/>
<dbReference type="VEuPathDB" id="HostDB:ENSG00000268223"/>
<dbReference type="eggNOG" id="KOG4850">
    <property type="taxonomic scope" value="Eukaryota"/>
</dbReference>
<dbReference type="GeneTree" id="ENSGT00940000160347"/>
<dbReference type="HOGENOM" id="CLU_105549_2_0_1"/>
<dbReference type="InParanoid" id="P0DKL9"/>
<dbReference type="OMA" id="WVYDDIV"/>
<dbReference type="OrthoDB" id="5984406at2759"/>
<dbReference type="PAN-GO" id="P0DKL9">
    <property type="GO annotations" value="0 GO annotations based on evolutionary models"/>
</dbReference>
<dbReference type="PhylomeDB" id="P0DKL9"/>
<dbReference type="PathwayCommons" id="P0DKL9"/>
<dbReference type="SignaLink" id="P0DKL9"/>
<dbReference type="BioGRID-ORCS" id="644100">
    <property type="hits" value="12 hits in 1052 CRISPR screens"/>
</dbReference>
<dbReference type="ChiTaRS" id="ARL14EPL">
    <property type="organism name" value="human"/>
</dbReference>
<dbReference type="GenomeRNAi" id="644100"/>
<dbReference type="Pharos" id="P0DKL9">
    <property type="development level" value="Tdark"/>
</dbReference>
<dbReference type="PRO" id="PR:P0DKL9"/>
<dbReference type="Proteomes" id="UP000005640">
    <property type="component" value="Chromosome 5"/>
</dbReference>
<dbReference type="RNAct" id="P0DKL9">
    <property type="molecule type" value="protein"/>
</dbReference>
<dbReference type="Bgee" id="ENSG00000268223">
    <property type="expression patterns" value="Expressed in male germ line stem cell (sensu Vertebrata) in testis and 12 other cell types or tissues"/>
</dbReference>
<dbReference type="InterPro" id="IPR029264">
    <property type="entry name" value="ARF7EP_C"/>
</dbReference>
<dbReference type="InterPro" id="IPR053130">
    <property type="entry name" value="ARL14_effector"/>
</dbReference>
<dbReference type="PANTHER" id="PTHR46804">
    <property type="entry name" value="ADP RIBOSYLATION FACTOR LIKE GTPASE 14 EFFECTOR PROTEIN LIKE"/>
    <property type="match status" value="1"/>
</dbReference>
<dbReference type="PANTHER" id="PTHR46804:SF4">
    <property type="entry name" value="ARL14 EFFECTOR PROTEIN-LIKE"/>
    <property type="match status" value="1"/>
</dbReference>
<dbReference type="Pfam" id="PF14949">
    <property type="entry name" value="ARF7EP_C"/>
    <property type="match status" value="1"/>
</dbReference>
<keyword id="KW-1267">Proteomics identification</keyword>
<keyword id="KW-1185">Reference proteome</keyword>
<evidence type="ECO:0000256" key="1">
    <source>
        <dbReference type="SAM" id="MobiDB-lite"/>
    </source>
</evidence>
<reference key="1">
    <citation type="journal article" date="2004" name="Nature">
        <title>The DNA sequence and comparative analysis of human chromosome 5.</title>
        <authorList>
            <person name="Schmutz J."/>
            <person name="Martin J."/>
            <person name="Terry A."/>
            <person name="Couronne O."/>
            <person name="Grimwood J."/>
            <person name="Lowry S."/>
            <person name="Gordon L.A."/>
            <person name="Scott D."/>
            <person name="Xie G."/>
            <person name="Huang W."/>
            <person name="Hellsten U."/>
            <person name="Tran-Gyamfi M."/>
            <person name="She X."/>
            <person name="Prabhakar S."/>
            <person name="Aerts A."/>
            <person name="Altherr M."/>
            <person name="Bajorek E."/>
            <person name="Black S."/>
            <person name="Branscomb E."/>
            <person name="Caoile C."/>
            <person name="Challacombe J.F."/>
            <person name="Chan Y.M."/>
            <person name="Denys M."/>
            <person name="Detter J.C."/>
            <person name="Escobar J."/>
            <person name="Flowers D."/>
            <person name="Fotopulos D."/>
            <person name="Glavina T."/>
            <person name="Gomez M."/>
            <person name="Gonzales E."/>
            <person name="Goodstein D."/>
            <person name="Grigoriev I."/>
            <person name="Groza M."/>
            <person name="Hammon N."/>
            <person name="Hawkins T."/>
            <person name="Haydu L."/>
            <person name="Israni S."/>
            <person name="Jett J."/>
            <person name="Kadner K."/>
            <person name="Kimball H."/>
            <person name="Kobayashi A."/>
            <person name="Lopez F."/>
            <person name="Lou Y."/>
            <person name="Martinez D."/>
            <person name="Medina C."/>
            <person name="Morgan J."/>
            <person name="Nandkeshwar R."/>
            <person name="Noonan J.P."/>
            <person name="Pitluck S."/>
            <person name="Pollard M."/>
            <person name="Predki P."/>
            <person name="Priest J."/>
            <person name="Ramirez L."/>
            <person name="Retterer J."/>
            <person name="Rodriguez A."/>
            <person name="Rogers S."/>
            <person name="Salamov A."/>
            <person name="Salazar A."/>
            <person name="Thayer N."/>
            <person name="Tice H."/>
            <person name="Tsai M."/>
            <person name="Ustaszewska A."/>
            <person name="Vo N."/>
            <person name="Wheeler J."/>
            <person name="Wu K."/>
            <person name="Yang J."/>
            <person name="Dickson M."/>
            <person name="Cheng J.-F."/>
            <person name="Eichler E.E."/>
            <person name="Olsen A."/>
            <person name="Pennacchio L.A."/>
            <person name="Rokhsar D.S."/>
            <person name="Richardson P."/>
            <person name="Lucas S.M."/>
            <person name="Myers R.M."/>
            <person name="Rubin E.M."/>
        </authorList>
    </citation>
    <scope>NUCLEOTIDE SEQUENCE [LARGE SCALE GENOMIC DNA]</scope>
</reference>
<name>A14EL_HUMAN</name>
<accession>P0DKL9</accession>
<gene>
    <name type="primary">ARL14EPL</name>
</gene>
<proteinExistence type="evidence at protein level"/>
<protein>
    <recommendedName>
        <fullName>ARL14 effector protein-like</fullName>
    </recommendedName>
</protein>
<sequence length="152" mass="17712">MNEQSEKNNSIQERHTDHSFPEKNCQIGQKQLQQIERQLKCLAFRNPGPQVADFNPETRQQKKKARMSKMNEYFSTKYKIMRKYDKSGRLICNDADLCDCLEKNCLGCFYPCPKCNSNKCGPECRCNRRWVYDAIVTESGEVISTLPFNVPD</sequence>
<feature type="chain" id="PRO_0000419646" description="ARL14 effector protein-like">
    <location>
        <begin position="1"/>
        <end position="152"/>
    </location>
</feature>
<feature type="region of interest" description="Disordered" evidence="1">
    <location>
        <begin position="1"/>
        <end position="21"/>
    </location>
</feature>
<organism>
    <name type="scientific">Homo sapiens</name>
    <name type="common">Human</name>
    <dbReference type="NCBI Taxonomy" id="9606"/>
    <lineage>
        <taxon>Eukaryota</taxon>
        <taxon>Metazoa</taxon>
        <taxon>Chordata</taxon>
        <taxon>Craniata</taxon>
        <taxon>Vertebrata</taxon>
        <taxon>Euteleostomi</taxon>
        <taxon>Mammalia</taxon>
        <taxon>Eutheria</taxon>
        <taxon>Euarchontoglires</taxon>
        <taxon>Primates</taxon>
        <taxon>Haplorrhini</taxon>
        <taxon>Catarrhini</taxon>
        <taxon>Hominidae</taxon>
        <taxon>Homo</taxon>
    </lineage>
</organism>